<proteinExistence type="evidence at transcript level"/>
<keyword id="KW-0966">Cell projection</keyword>
<keyword id="KW-0175">Coiled coil</keyword>
<keyword id="KW-0963">Cytoplasm</keyword>
<keyword id="KW-0968">Cytoplasmic vesicle</keyword>
<keyword id="KW-0206">Cytoskeleton</keyword>
<keyword id="KW-0342">GTP-binding</keyword>
<keyword id="KW-0472">Membrane</keyword>
<keyword id="KW-0547">Nucleotide-binding</keyword>
<keyword id="KW-1185">Reference proteome</keyword>
<keyword id="KW-0770">Synapse</keyword>
<reference key="1">
    <citation type="submission" date="2008-03" db="EMBL/GenBank/DDBJ databases">
        <authorList>
            <consortium name="NIH - Xenopus Gene Collection (XGC) project"/>
        </authorList>
    </citation>
    <scope>NUCLEOTIDE SEQUENCE [LARGE SCALE MRNA]</scope>
    <source>
        <tissue>Embryo</tissue>
    </source>
</reference>
<name>SEPT8_XENTR</name>
<feature type="chain" id="PRO_0000363233" description="Septin-8">
    <location>
        <begin position="1"/>
        <end position="427"/>
    </location>
</feature>
<feature type="domain" description="Septin-type G" evidence="5">
    <location>
        <begin position="39"/>
        <end position="305"/>
    </location>
</feature>
<feature type="region of interest" description="G1 motif" evidence="5">
    <location>
        <begin position="49"/>
        <end position="56"/>
    </location>
</feature>
<feature type="region of interest" description="G3 motif" evidence="5">
    <location>
        <begin position="101"/>
        <end position="104"/>
    </location>
</feature>
<feature type="region of interest" description="G4 motif" evidence="5">
    <location>
        <begin position="184"/>
        <end position="187"/>
    </location>
</feature>
<feature type="region of interest" description="Disordered" evidence="6">
    <location>
        <begin position="373"/>
        <end position="427"/>
    </location>
</feature>
<feature type="coiled-coil region" evidence="4">
    <location>
        <begin position="321"/>
        <end position="409"/>
    </location>
</feature>
<feature type="compositionally biased region" description="Basic and acidic residues" evidence="6">
    <location>
        <begin position="374"/>
        <end position="389"/>
    </location>
</feature>
<feature type="compositionally biased region" description="Polar residues" evidence="6">
    <location>
        <begin position="406"/>
        <end position="418"/>
    </location>
</feature>
<feature type="binding site" evidence="1">
    <location>
        <begin position="49"/>
        <end position="56"/>
    </location>
    <ligand>
        <name>GTP</name>
        <dbReference type="ChEBI" id="CHEBI:37565"/>
    </ligand>
</feature>
<feature type="binding site" evidence="1">
    <location>
        <position position="104"/>
    </location>
    <ligand>
        <name>GTP</name>
        <dbReference type="ChEBI" id="CHEBI:37565"/>
    </ligand>
</feature>
<feature type="binding site" evidence="1">
    <location>
        <begin position="185"/>
        <end position="193"/>
    </location>
    <ligand>
        <name>GTP</name>
        <dbReference type="ChEBI" id="CHEBI:37565"/>
    </ligand>
</feature>
<feature type="binding site" evidence="1">
    <location>
        <position position="239"/>
    </location>
    <ligand>
        <name>GTP</name>
        <dbReference type="ChEBI" id="CHEBI:37565"/>
    </ligand>
</feature>
<feature type="binding site" evidence="1">
    <location>
        <position position="254"/>
    </location>
    <ligand>
        <name>GTP</name>
        <dbReference type="ChEBI" id="CHEBI:37565"/>
    </ligand>
</feature>
<evidence type="ECO:0000250" key="1"/>
<evidence type="ECO:0000250" key="2">
    <source>
        <dbReference type="UniProtKB" id="B0BNF1"/>
    </source>
</evidence>
<evidence type="ECO:0000250" key="3">
    <source>
        <dbReference type="UniProtKB" id="Q92599"/>
    </source>
</evidence>
<evidence type="ECO:0000255" key="4"/>
<evidence type="ECO:0000255" key="5">
    <source>
        <dbReference type="PROSITE-ProRule" id="PRU01056"/>
    </source>
</evidence>
<evidence type="ECO:0000256" key="6">
    <source>
        <dbReference type="SAM" id="MobiDB-lite"/>
    </source>
</evidence>
<protein>
    <recommendedName>
        <fullName>Septin-8</fullName>
    </recommendedName>
</protein>
<sequence>MAATDVERVSNEEKRSLAMTGHVGFDSLPDQLVSKSVTQGFCFNILCVGETGIGKSTLMNTLFNTTFETEEASHYENGVRLRPRTYDLQESNVHLKLTIVDTVGFGDQINKDDSYRSVVDYIDTQFENYLQEELKIRRSLFNYHDSRIHVCLYFITPTGHSLKSLDLVTMKKLDSKVNIIPIIAKADTISKSELHKFKIKIMSELVSNGVQIYQFPTDDDAVAEINSVMNAHLPFAVVGSTEEVKVGNKLVRARQYPWGVVQVENESHCDFVKLREMLIRVNMEDLREQTHTRHYELYRRCKLEEMGFKDNDPDTQPFSLQETYEAKRKEFLGELQRKEEEMRQMFVNKVKETEAELKDKERELQEKFMQLKRVHQEESKKVEDKRRDLEEEMNSFNRRKAAMEALQSQSFQATSQQPLKKDKDRKN</sequence>
<gene>
    <name evidence="3" type="primary">septin8</name>
    <name type="synonym">sept8</name>
</gene>
<organism>
    <name type="scientific">Xenopus tropicalis</name>
    <name type="common">Western clawed frog</name>
    <name type="synonym">Silurana tropicalis</name>
    <dbReference type="NCBI Taxonomy" id="8364"/>
    <lineage>
        <taxon>Eukaryota</taxon>
        <taxon>Metazoa</taxon>
        <taxon>Chordata</taxon>
        <taxon>Craniata</taxon>
        <taxon>Vertebrata</taxon>
        <taxon>Euteleostomi</taxon>
        <taxon>Amphibia</taxon>
        <taxon>Batrachia</taxon>
        <taxon>Anura</taxon>
        <taxon>Pipoidea</taxon>
        <taxon>Pipidae</taxon>
        <taxon>Xenopodinae</taxon>
        <taxon>Xenopus</taxon>
        <taxon>Silurana</taxon>
    </lineage>
</organism>
<comment type="subcellular location">
    <subcellularLocation>
        <location evidence="2">Cytoplasm</location>
    </subcellularLocation>
    <subcellularLocation>
        <location evidence="1">Cytoplasm</location>
        <location evidence="1">Cytoskeleton</location>
    </subcellularLocation>
    <subcellularLocation>
        <location evidence="2">Synapse</location>
    </subcellularLocation>
    <subcellularLocation>
        <location evidence="2">Cell projection</location>
        <location evidence="2">Axon</location>
    </subcellularLocation>
    <subcellularLocation>
        <location evidence="2">Cytoplasmic vesicle</location>
        <location evidence="2">Secretory vesicle</location>
        <location evidence="2">Synaptic vesicle membrane</location>
    </subcellularLocation>
    <subcellularLocation>
        <location evidence="2">Presynapse</location>
    </subcellularLocation>
    <text evidence="2">Expressed in axons of immature neurons, localizes to synapses in mature neurons.</text>
</comment>
<comment type="similarity">
    <text evidence="5">Belongs to the TRAFAC class TrmE-Era-EngA-EngB-Septin-like GTPase superfamily. Septin GTPase family.</text>
</comment>
<accession>B1H120</accession>
<dbReference type="EMBL" id="BC160437">
    <property type="protein sequence ID" value="AAI60437.1"/>
    <property type="molecule type" value="mRNA"/>
</dbReference>
<dbReference type="RefSeq" id="NP_001116199.1">
    <property type="nucleotide sequence ID" value="NM_001122727.1"/>
</dbReference>
<dbReference type="SMR" id="B1H120"/>
<dbReference type="FunCoup" id="B1H120">
    <property type="interactions" value="481"/>
</dbReference>
<dbReference type="STRING" id="8364.ENSXETP00000020884"/>
<dbReference type="PaxDb" id="8364-ENSXETP00000062946"/>
<dbReference type="GeneID" id="100126684"/>
<dbReference type="KEGG" id="xtr:100126684"/>
<dbReference type="AGR" id="Xenbase:XB-GENE-1032907"/>
<dbReference type="CTD" id="23176"/>
<dbReference type="Xenbase" id="XB-GENE-1032907">
    <property type="gene designation" value="septin8"/>
</dbReference>
<dbReference type="eggNOG" id="KOG3859">
    <property type="taxonomic scope" value="Eukaryota"/>
</dbReference>
<dbReference type="InParanoid" id="B1H120"/>
<dbReference type="OrthoDB" id="416553at2759"/>
<dbReference type="Proteomes" id="UP000008143">
    <property type="component" value="Chromosome 3"/>
</dbReference>
<dbReference type="Bgee" id="ENSXETG00000030617">
    <property type="expression patterns" value="Expressed in brain and 13 other cell types or tissues"/>
</dbReference>
<dbReference type="GO" id="GO:0030424">
    <property type="term" value="C:axon"/>
    <property type="evidence" value="ECO:0007669"/>
    <property type="project" value="UniProtKB-SubCell"/>
</dbReference>
<dbReference type="GO" id="GO:0005856">
    <property type="term" value="C:cytoskeleton"/>
    <property type="evidence" value="ECO:0007669"/>
    <property type="project" value="UniProtKB-SubCell"/>
</dbReference>
<dbReference type="GO" id="GO:0098793">
    <property type="term" value="C:presynapse"/>
    <property type="evidence" value="ECO:0000250"/>
    <property type="project" value="UniProtKB"/>
</dbReference>
<dbReference type="GO" id="GO:0030672">
    <property type="term" value="C:synaptic vesicle membrane"/>
    <property type="evidence" value="ECO:0007669"/>
    <property type="project" value="UniProtKB-SubCell"/>
</dbReference>
<dbReference type="GO" id="GO:0005525">
    <property type="term" value="F:GTP binding"/>
    <property type="evidence" value="ECO:0007669"/>
    <property type="project" value="UniProtKB-KW"/>
</dbReference>
<dbReference type="GO" id="GO:0035542">
    <property type="term" value="P:regulation of SNARE complex assembly"/>
    <property type="evidence" value="ECO:0000250"/>
    <property type="project" value="UniProtKB"/>
</dbReference>
<dbReference type="CDD" id="cd01850">
    <property type="entry name" value="CDC_Septin"/>
    <property type="match status" value="1"/>
</dbReference>
<dbReference type="FunFam" id="3.40.50.300:FF:000036">
    <property type="entry name" value="septin-6 isoform X2"/>
    <property type="match status" value="1"/>
</dbReference>
<dbReference type="Gene3D" id="3.40.50.300">
    <property type="entry name" value="P-loop containing nucleotide triphosphate hydrolases"/>
    <property type="match status" value="1"/>
</dbReference>
<dbReference type="InterPro" id="IPR030379">
    <property type="entry name" value="G_SEPTIN_dom"/>
</dbReference>
<dbReference type="InterPro" id="IPR027417">
    <property type="entry name" value="P-loop_NTPase"/>
</dbReference>
<dbReference type="InterPro" id="IPR016491">
    <property type="entry name" value="Septin"/>
</dbReference>
<dbReference type="PANTHER" id="PTHR18884">
    <property type="entry name" value="SEPTIN"/>
    <property type="match status" value="1"/>
</dbReference>
<dbReference type="Pfam" id="PF00735">
    <property type="entry name" value="Septin"/>
    <property type="match status" value="1"/>
</dbReference>
<dbReference type="PIRSF" id="PIRSF006698">
    <property type="entry name" value="Septin"/>
    <property type="match status" value="1"/>
</dbReference>
<dbReference type="SUPFAM" id="SSF52540">
    <property type="entry name" value="P-loop containing nucleoside triphosphate hydrolases"/>
    <property type="match status" value="1"/>
</dbReference>
<dbReference type="PROSITE" id="PS51719">
    <property type="entry name" value="G_SEPTIN"/>
    <property type="match status" value="1"/>
</dbReference>